<protein>
    <recommendedName>
        <fullName evidence="1">Transcription antitermination protein NusB</fullName>
    </recommendedName>
    <alternativeName>
        <fullName evidence="1">Antitermination factor NusB</fullName>
    </alternativeName>
</protein>
<dbReference type="EMBL" id="AE008922">
    <property type="protein sequence ID" value="AAM40014.1"/>
    <property type="molecule type" value="Genomic_DNA"/>
</dbReference>
<dbReference type="RefSeq" id="NP_636090.1">
    <property type="nucleotide sequence ID" value="NC_003902.1"/>
</dbReference>
<dbReference type="RefSeq" id="WP_011035937.1">
    <property type="nucleotide sequence ID" value="NC_003902.1"/>
</dbReference>
<dbReference type="SMR" id="Q8PCM6"/>
<dbReference type="STRING" id="190485.XCC0698"/>
<dbReference type="EnsemblBacteria" id="AAM40014">
    <property type="protein sequence ID" value="AAM40014"/>
    <property type="gene ID" value="XCC0698"/>
</dbReference>
<dbReference type="KEGG" id="xcc:XCC0698"/>
<dbReference type="PATRIC" id="fig|190485.4.peg.763"/>
<dbReference type="eggNOG" id="COG0781">
    <property type="taxonomic scope" value="Bacteria"/>
</dbReference>
<dbReference type="HOGENOM" id="CLU_087843_4_1_6"/>
<dbReference type="OrthoDB" id="9789556at2"/>
<dbReference type="Proteomes" id="UP000001010">
    <property type="component" value="Chromosome"/>
</dbReference>
<dbReference type="GO" id="GO:0005829">
    <property type="term" value="C:cytosol"/>
    <property type="evidence" value="ECO:0000318"/>
    <property type="project" value="GO_Central"/>
</dbReference>
<dbReference type="GO" id="GO:0003723">
    <property type="term" value="F:RNA binding"/>
    <property type="evidence" value="ECO:0007669"/>
    <property type="project" value="UniProtKB-UniRule"/>
</dbReference>
<dbReference type="GO" id="GO:0006353">
    <property type="term" value="P:DNA-templated transcription termination"/>
    <property type="evidence" value="ECO:0007669"/>
    <property type="project" value="UniProtKB-UniRule"/>
</dbReference>
<dbReference type="GO" id="GO:0031564">
    <property type="term" value="P:transcription antitermination"/>
    <property type="evidence" value="ECO:0007669"/>
    <property type="project" value="UniProtKB-KW"/>
</dbReference>
<dbReference type="FunFam" id="1.10.940.10:FF:000001">
    <property type="entry name" value="Transcription antitermination factor NusB"/>
    <property type="match status" value="1"/>
</dbReference>
<dbReference type="Gene3D" id="1.10.940.10">
    <property type="entry name" value="NusB-like"/>
    <property type="match status" value="1"/>
</dbReference>
<dbReference type="HAMAP" id="MF_00073">
    <property type="entry name" value="NusB"/>
    <property type="match status" value="1"/>
</dbReference>
<dbReference type="InterPro" id="IPR035926">
    <property type="entry name" value="NusB-like_sf"/>
</dbReference>
<dbReference type="InterPro" id="IPR011605">
    <property type="entry name" value="NusB_fam"/>
</dbReference>
<dbReference type="InterPro" id="IPR006027">
    <property type="entry name" value="NusB_RsmB_TIM44"/>
</dbReference>
<dbReference type="NCBIfam" id="TIGR01951">
    <property type="entry name" value="nusB"/>
    <property type="match status" value="1"/>
</dbReference>
<dbReference type="PANTHER" id="PTHR11078:SF3">
    <property type="entry name" value="ANTITERMINATION NUSB DOMAIN-CONTAINING PROTEIN"/>
    <property type="match status" value="1"/>
</dbReference>
<dbReference type="PANTHER" id="PTHR11078">
    <property type="entry name" value="N UTILIZATION SUBSTANCE PROTEIN B-RELATED"/>
    <property type="match status" value="1"/>
</dbReference>
<dbReference type="Pfam" id="PF01029">
    <property type="entry name" value="NusB"/>
    <property type="match status" value="1"/>
</dbReference>
<dbReference type="SUPFAM" id="SSF48013">
    <property type="entry name" value="NusB-like"/>
    <property type="match status" value="1"/>
</dbReference>
<evidence type="ECO:0000255" key="1">
    <source>
        <dbReference type="HAMAP-Rule" id="MF_00073"/>
    </source>
</evidence>
<sequence length="159" mass="17717">MSKPGGHARHGRRDGIDPVLRSRARRRALQAVYAWQIAGGFAKQVIAQFAHEQAHEVADLAYFESLVEGVLSNRSELDTALTPYLDRGVEEVDAIERAVLRLAAYELLYRQDVPYRVVINEAIETAKRFGSEHGHTYVNGVLDRAAVEWRKMESGASGA</sequence>
<reference key="1">
    <citation type="journal article" date="2002" name="Nature">
        <title>Comparison of the genomes of two Xanthomonas pathogens with differing host specificities.</title>
        <authorList>
            <person name="da Silva A.C.R."/>
            <person name="Ferro J.A."/>
            <person name="Reinach F.C."/>
            <person name="Farah C.S."/>
            <person name="Furlan L.R."/>
            <person name="Quaggio R.B."/>
            <person name="Monteiro-Vitorello C.B."/>
            <person name="Van Sluys M.A."/>
            <person name="Almeida N.F. Jr."/>
            <person name="Alves L.M.C."/>
            <person name="do Amaral A.M."/>
            <person name="Bertolini M.C."/>
            <person name="Camargo L.E.A."/>
            <person name="Camarotte G."/>
            <person name="Cannavan F."/>
            <person name="Cardozo J."/>
            <person name="Chambergo F."/>
            <person name="Ciapina L.P."/>
            <person name="Cicarelli R.M.B."/>
            <person name="Coutinho L.L."/>
            <person name="Cursino-Santos J.R."/>
            <person name="El-Dorry H."/>
            <person name="Faria J.B."/>
            <person name="Ferreira A.J.S."/>
            <person name="Ferreira R.C.C."/>
            <person name="Ferro M.I.T."/>
            <person name="Formighieri E.F."/>
            <person name="Franco M.C."/>
            <person name="Greggio C.C."/>
            <person name="Gruber A."/>
            <person name="Katsuyama A.M."/>
            <person name="Kishi L.T."/>
            <person name="Leite R.P."/>
            <person name="Lemos E.G.M."/>
            <person name="Lemos M.V.F."/>
            <person name="Locali E.C."/>
            <person name="Machado M.A."/>
            <person name="Madeira A.M.B.N."/>
            <person name="Martinez-Rossi N.M."/>
            <person name="Martins E.C."/>
            <person name="Meidanis J."/>
            <person name="Menck C.F.M."/>
            <person name="Miyaki C.Y."/>
            <person name="Moon D.H."/>
            <person name="Moreira L.M."/>
            <person name="Novo M.T.M."/>
            <person name="Okura V.K."/>
            <person name="Oliveira M.C."/>
            <person name="Oliveira V.R."/>
            <person name="Pereira H.A."/>
            <person name="Rossi A."/>
            <person name="Sena J.A.D."/>
            <person name="Silva C."/>
            <person name="de Souza R.F."/>
            <person name="Spinola L.A.F."/>
            <person name="Takita M.A."/>
            <person name="Tamura R.E."/>
            <person name="Teixeira E.C."/>
            <person name="Tezza R.I.D."/>
            <person name="Trindade dos Santos M."/>
            <person name="Truffi D."/>
            <person name="Tsai S.M."/>
            <person name="White F.F."/>
            <person name="Setubal J.C."/>
            <person name="Kitajima J.P."/>
        </authorList>
    </citation>
    <scope>NUCLEOTIDE SEQUENCE [LARGE SCALE GENOMIC DNA]</scope>
    <source>
        <strain>ATCC 33913 / DSM 3586 / NCPPB 528 / LMG 568 / P 25</strain>
    </source>
</reference>
<accession>Q8PCM6</accession>
<name>NUSB_XANCP</name>
<gene>
    <name evidence="1" type="primary">nusB</name>
    <name type="ordered locus">XCC0698</name>
</gene>
<organism>
    <name type="scientific">Xanthomonas campestris pv. campestris (strain ATCC 33913 / DSM 3586 / NCPPB 528 / LMG 568 / P 25)</name>
    <dbReference type="NCBI Taxonomy" id="190485"/>
    <lineage>
        <taxon>Bacteria</taxon>
        <taxon>Pseudomonadati</taxon>
        <taxon>Pseudomonadota</taxon>
        <taxon>Gammaproteobacteria</taxon>
        <taxon>Lysobacterales</taxon>
        <taxon>Lysobacteraceae</taxon>
        <taxon>Xanthomonas</taxon>
    </lineage>
</organism>
<proteinExistence type="inferred from homology"/>
<comment type="function">
    <text evidence="1">Involved in transcription antitermination. Required for transcription of ribosomal RNA (rRNA) genes. Binds specifically to the boxA antiterminator sequence of the ribosomal RNA (rrn) operons.</text>
</comment>
<comment type="similarity">
    <text evidence="1">Belongs to the NusB family.</text>
</comment>
<keyword id="KW-1185">Reference proteome</keyword>
<keyword id="KW-0694">RNA-binding</keyword>
<keyword id="KW-0804">Transcription</keyword>
<keyword id="KW-0889">Transcription antitermination</keyword>
<keyword id="KW-0805">Transcription regulation</keyword>
<feature type="chain" id="PRO_0000176609" description="Transcription antitermination protein NusB">
    <location>
        <begin position="1"/>
        <end position="159"/>
    </location>
</feature>